<dbReference type="EMBL" id="AY262259">
    <property type="protein sequence ID" value="AAP36989.1"/>
    <property type="molecule type" value="mRNA"/>
</dbReference>
<dbReference type="EMBL" id="AK000602">
    <property type="protein sequence ID" value="BAA91283.1"/>
    <property type="molecule type" value="mRNA"/>
</dbReference>
<dbReference type="EMBL" id="AK128624">
    <property type="protein sequence ID" value="BAC87537.1"/>
    <property type="status" value="ALT_SEQ"/>
    <property type="molecule type" value="mRNA"/>
</dbReference>
<dbReference type="EMBL" id="AY279349">
    <property type="protein sequence ID" value="AAQ62846.1"/>
    <property type="molecule type" value="mRNA"/>
</dbReference>
<dbReference type="EMBL" id="AC048382">
    <property type="status" value="NOT_ANNOTATED_CDS"/>
    <property type="molecule type" value="Genomic_DNA"/>
</dbReference>
<dbReference type="EMBL" id="BC041620">
    <property type="protein sequence ID" value="AAH41620.1"/>
    <property type="molecule type" value="mRNA"/>
</dbReference>
<dbReference type="EMBL" id="BC136342">
    <property type="protein sequence ID" value="AAI36343.1"/>
    <property type="molecule type" value="mRNA"/>
</dbReference>
<dbReference type="CCDS" id="CCDS10329.2">
    <molecule id="Q7Z7L9-1"/>
</dbReference>
<dbReference type="CCDS" id="CCDS32315.1">
    <molecule id="Q7Z7L9-4"/>
</dbReference>
<dbReference type="CCDS" id="CCDS32316.1">
    <molecule id="Q7Z7L9-3"/>
</dbReference>
<dbReference type="RefSeq" id="NP_001007073.1">
    <molecule id="Q7Z7L9-4"/>
    <property type="nucleotide sequence ID" value="NM_001007072.2"/>
</dbReference>
<dbReference type="RefSeq" id="NP_060364.4">
    <molecule id="Q7Z7L9-3"/>
    <property type="nucleotide sequence ID" value="NM_017894.5"/>
</dbReference>
<dbReference type="RefSeq" id="NP_870992.2">
    <molecule id="Q7Z7L9-1"/>
    <property type="nucleotide sequence ID" value="NM_181877.4"/>
</dbReference>
<dbReference type="RefSeq" id="XP_024305743.1">
    <molecule id="Q7Z7L9-1"/>
    <property type="nucleotide sequence ID" value="XM_024449975.2"/>
</dbReference>
<dbReference type="RefSeq" id="XP_047288737.1">
    <molecule id="Q7Z7L9-1"/>
    <property type="nucleotide sequence ID" value="XM_047432781.1"/>
</dbReference>
<dbReference type="SMR" id="Q7Z7L9"/>
<dbReference type="BioGRID" id="120326">
    <property type="interactions" value="22"/>
</dbReference>
<dbReference type="FunCoup" id="Q7Z7L9">
    <property type="interactions" value="16"/>
</dbReference>
<dbReference type="IntAct" id="Q7Z7L9">
    <property type="interactions" value="5"/>
</dbReference>
<dbReference type="STRING" id="9606.ENSP00000410198"/>
<dbReference type="GlyGen" id="Q7Z7L9">
    <property type="glycosylation" value="1 site, 1 O-linked glycan (1 site)"/>
</dbReference>
<dbReference type="iPTMnet" id="Q7Z7L9"/>
<dbReference type="PhosphoSitePlus" id="Q7Z7L9"/>
<dbReference type="BioMuta" id="ZSCAN2"/>
<dbReference type="DMDM" id="296453062"/>
<dbReference type="jPOST" id="Q7Z7L9"/>
<dbReference type="MassIVE" id="Q7Z7L9"/>
<dbReference type="PaxDb" id="9606-ENSP00000410198"/>
<dbReference type="PeptideAtlas" id="Q7Z7L9"/>
<dbReference type="ProteomicsDB" id="69564">
    <molecule id="Q7Z7L9-1"/>
</dbReference>
<dbReference type="ProteomicsDB" id="69565">
    <molecule id="Q7Z7L9-3"/>
</dbReference>
<dbReference type="ProteomicsDB" id="69566">
    <molecule id="Q7Z7L9-4"/>
</dbReference>
<dbReference type="Antibodypedia" id="1841">
    <property type="antibodies" value="137 antibodies from 24 providers"/>
</dbReference>
<dbReference type="DNASU" id="54993"/>
<dbReference type="Ensembl" id="ENST00000334141.7">
    <molecule id="Q7Z7L9-3"/>
    <property type="protein sequence ID" value="ENSP00000333895.3"/>
    <property type="gene ID" value="ENSG00000176371.14"/>
</dbReference>
<dbReference type="Ensembl" id="ENST00000379358.7">
    <molecule id="Q7Z7L9-4"/>
    <property type="protein sequence ID" value="ENSP00000368663.3"/>
    <property type="gene ID" value="ENSG00000176371.14"/>
</dbReference>
<dbReference type="Ensembl" id="ENST00000448803.6">
    <molecule id="Q7Z7L9-1"/>
    <property type="protein sequence ID" value="ENSP00000410198.2"/>
    <property type="gene ID" value="ENSG00000176371.14"/>
</dbReference>
<dbReference type="Ensembl" id="ENST00000540894.5">
    <molecule id="Q7Z7L9-1"/>
    <property type="protein sequence ID" value="ENSP00000441855.1"/>
    <property type="gene ID" value="ENSG00000176371.14"/>
</dbReference>
<dbReference type="Ensembl" id="ENST00000546148.6">
    <molecule id="Q7Z7L9-1"/>
    <property type="protein sequence ID" value="ENSP00000445451.1"/>
    <property type="gene ID" value="ENSG00000176371.14"/>
</dbReference>
<dbReference type="Ensembl" id="ENST00000708197.1">
    <molecule id="Q7Z7L9-1"/>
    <property type="protein sequence ID" value="ENSP00000517117.1"/>
    <property type="gene ID" value="ENSG00000291625.1"/>
</dbReference>
<dbReference type="Ensembl" id="ENST00000708199.1">
    <molecule id="Q7Z7L9-1"/>
    <property type="protein sequence ID" value="ENSP00000517119.1"/>
    <property type="gene ID" value="ENSG00000291625.1"/>
</dbReference>
<dbReference type="Ensembl" id="ENST00000708201.1">
    <molecule id="Q7Z7L9-3"/>
    <property type="protein sequence ID" value="ENSP00000517121.1"/>
    <property type="gene ID" value="ENSG00000291625.1"/>
</dbReference>
<dbReference type="Ensembl" id="ENST00000708204.1">
    <molecule id="Q7Z7L9-4"/>
    <property type="protein sequence ID" value="ENSP00000517124.1"/>
    <property type="gene ID" value="ENSG00000291625.1"/>
</dbReference>
<dbReference type="Ensembl" id="ENST00000708208.1">
    <molecule id="Q7Z7L9-1"/>
    <property type="protein sequence ID" value="ENSP00000517128.1"/>
    <property type="gene ID" value="ENSG00000291625.1"/>
</dbReference>
<dbReference type="GeneID" id="54993"/>
<dbReference type="KEGG" id="hsa:54993"/>
<dbReference type="MANE-Select" id="ENST00000546148.6">
    <property type="protein sequence ID" value="ENSP00000445451.1"/>
    <property type="RefSeq nucleotide sequence ID" value="NM_181877.4"/>
    <property type="RefSeq protein sequence ID" value="NP_870992.2"/>
</dbReference>
<dbReference type="UCSC" id="uc002bkp.4">
    <molecule id="Q7Z7L9-1"/>
    <property type="organism name" value="human"/>
</dbReference>
<dbReference type="AGR" id="HGNC:20994"/>
<dbReference type="CTD" id="54993"/>
<dbReference type="DisGeNET" id="54993"/>
<dbReference type="GeneCards" id="ZSCAN2"/>
<dbReference type="HGNC" id="HGNC:20994">
    <property type="gene designation" value="ZSCAN2"/>
</dbReference>
<dbReference type="HPA" id="ENSG00000176371">
    <property type="expression patterns" value="Low tissue specificity"/>
</dbReference>
<dbReference type="MalaCards" id="ZSCAN2"/>
<dbReference type="neXtProt" id="NX_Q7Z7L9"/>
<dbReference type="OpenTargets" id="ENSG00000176371"/>
<dbReference type="PharmGKB" id="PA134941325"/>
<dbReference type="VEuPathDB" id="HostDB:ENSG00000176371"/>
<dbReference type="eggNOG" id="KOG1721">
    <property type="taxonomic scope" value="Eukaryota"/>
</dbReference>
<dbReference type="GeneTree" id="ENSGT00940000161710"/>
<dbReference type="HOGENOM" id="CLU_002678_49_8_1"/>
<dbReference type="InParanoid" id="Q7Z7L9"/>
<dbReference type="OMA" id="ILLMHQR"/>
<dbReference type="OrthoDB" id="1095242at2759"/>
<dbReference type="PAN-GO" id="Q7Z7L9">
    <property type="GO annotations" value="3 GO annotations based on evolutionary models"/>
</dbReference>
<dbReference type="PhylomeDB" id="Q7Z7L9"/>
<dbReference type="TreeFam" id="TF337913"/>
<dbReference type="PathwayCommons" id="Q7Z7L9"/>
<dbReference type="SignaLink" id="Q7Z7L9"/>
<dbReference type="BioGRID-ORCS" id="54993">
    <property type="hits" value="16 hits in 1177 CRISPR screens"/>
</dbReference>
<dbReference type="ChiTaRS" id="ZSCAN2">
    <property type="organism name" value="human"/>
</dbReference>
<dbReference type="GenomeRNAi" id="54993"/>
<dbReference type="Pharos" id="Q7Z7L9">
    <property type="development level" value="Tdark"/>
</dbReference>
<dbReference type="PRO" id="PR:Q7Z7L9"/>
<dbReference type="Proteomes" id="UP000005640">
    <property type="component" value="Chromosome 15"/>
</dbReference>
<dbReference type="RNAct" id="Q7Z7L9">
    <property type="molecule type" value="protein"/>
</dbReference>
<dbReference type="Bgee" id="ENSG00000176371">
    <property type="expression patterns" value="Expressed in sperm and 157 other cell types or tissues"/>
</dbReference>
<dbReference type="ExpressionAtlas" id="Q7Z7L9">
    <property type="expression patterns" value="baseline and differential"/>
</dbReference>
<dbReference type="GO" id="GO:0005634">
    <property type="term" value="C:nucleus"/>
    <property type="evidence" value="ECO:0000318"/>
    <property type="project" value="GO_Central"/>
</dbReference>
<dbReference type="GO" id="GO:0000981">
    <property type="term" value="F:DNA-binding transcription factor activity, RNA polymerase II-specific"/>
    <property type="evidence" value="ECO:0000318"/>
    <property type="project" value="GO_Central"/>
</dbReference>
<dbReference type="GO" id="GO:0000977">
    <property type="term" value="F:RNA polymerase II transcription regulatory region sequence-specific DNA binding"/>
    <property type="evidence" value="ECO:0000318"/>
    <property type="project" value="GO_Central"/>
</dbReference>
<dbReference type="GO" id="GO:0008270">
    <property type="term" value="F:zinc ion binding"/>
    <property type="evidence" value="ECO:0007669"/>
    <property type="project" value="UniProtKB-KW"/>
</dbReference>
<dbReference type="GO" id="GO:0030154">
    <property type="term" value="P:cell differentiation"/>
    <property type="evidence" value="ECO:0007669"/>
    <property type="project" value="UniProtKB-KW"/>
</dbReference>
<dbReference type="GO" id="GO:0045944">
    <property type="term" value="P:positive regulation of transcription by RNA polymerase II"/>
    <property type="evidence" value="ECO:0007669"/>
    <property type="project" value="UniProtKB-ARBA"/>
</dbReference>
<dbReference type="GO" id="GO:0006357">
    <property type="term" value="P:regulation of transcription by RNA polymerase II"/>
    <property type="evidence" value="ECO:0000318"/>
    <property type="project" value="GO_Central"/>
</dbReference>
<dbReference type="GO" id="GO:0007283">
    <property type="term" value="P:spermatogenesis"/>
    <property type="evidence" value="ECO:0007669"/>
    <property type="project" value="UniProtKB-KW"/>
</dbReference>
<dbReference type="FunFam" id="3.30.160.60:FF:000088">
    <property type="entry name" value="Zinc finger and SCAN domain containing 2"/>
    <property type="match status" value="4"/>
</dbReference>
<dbReference type="FunFam" id="3.30.160.60:FF:003000">
    <property type="entry name" value="Zinc finger and SCAN domain-containing 20"/>
    <property type="match status" value="1"/>
</dbReference>
<dbReference type="FunFam" id="1.10.4020.10:FF:000002">
    <property type="entry name" value="zinc finger and SCAN domain-containing protein 2"/>
    <property type="match status" value="1"/>
</dbReference>
<dbReference type="FunFam" id="3.30.160.60:FF:000557">
    <property type="entry name" value="zinc finger and SCAN domain-containing protein 29"/>
    <property type="match status" value="1"/>
</dbReference>
<dbReference type="FunFam" id="3.30.160.60:FF:000725">
    <property type="entry name" value="zinc finger protein 205 isoform X1"/>
    <property type="match status" value="1"/>
</dbReference>
<dbReference type="FunFam" id="3.30.160.60:FF:000358">
    <property type="entry name" value="zinc finger protein 24"/>
    <property type="match status" value="1"/>
</dbReference>
<dbReference type="FunFam" id="3.30.160.60:FF:000269">
    <property type="entry name" value="Zinc finger protein 287"/>
    <property type="match status" value="1"/>
</dbReference>
<dbReference type="FunFam" id="3.30.160.60:FF:002343">
    <property type="entry name" value="Zinc finger protein 33A"/>
    <property type="match status" value="1"/>
</dbReference>
<dbReference type="FunFam" id="3.30.160.60:FF:000016">
    <property type="entry name" value="zinc finger protein 37 homolog"/>
    <property type="match status" value="1"/>
</dbReference>
<dbReference type="FunFam" id="3.30.160.60:FF:002090">
    <property type="entry name" value="Zinc finger protein 473"/>
    <property type="match status" value="1"/>
</dbReference>
<dbReference type="FunFam" id="3.30.160.60:FF:000990">
    <property type="entry name" value="zinc finger protein 629 isoform X2"/>
    <property type="match status" value="1"/>
</dbReference>
<dbReference type="FunFam" id="3.30.160.60:FF:000912">
    <property type="entry name" value="Zinc finger protein 660"/>
    <property type="match status" value="1"/>
</dbReference>
<dbReference type="Gene3D" id="3.30.160.60">
    <property type="entry name" value="Classic Zinc Finger"/>
    <property type="match status" value="14"/>
</dbReference>
<dbReference type="Gene3D" id="1.10.4020.10">
    <property type="entry name" value="DNA breaking-rejoining enzymes"/>
    <property type="match status" value="1"/>
</dbReference>
<dbReference type="InterPro" id="IPR050329">
    <property type="entry name" value="GLI_C2H2-zinc-finger"/>
</dbReference>
<dbReference type="InterPro" id="IPR003309">
    <property type="entry name" value="SCAN_dom"/>
</dbReference>
<dbReference type="InterPro" id="IPR038269">
    <property type="entry name" value="SCAN_sf"/>
</dbReference>
<dbReference type="InterPro" id="IPR036236">
    <property type="entry name" value="Znf_C2H2_sf"/>
</dbReference>
<dbReference type="InterPro" id="IPR013087">
    <property type="entry name" value="Znf_C2H2_type"/>
</dbReference>
<dbReference type="PANTHER" id="PTHR19818:SF158">
    <property type="entry name" value="C2H2-TYPE DOMAIN-CONTAINING PROTEIN-RELATED"/>
    <property type="match status" value="1"/>
</dbReference>
<dbReference type="PANTHER" id="PTHR19818">
    <property type="entry name" value="ZINC FINGER PROTEIN ZIC AND GLI"/>
    <property type="match status" value="1"/>
</dbReference>
<dbReference type="Pfam" id="PF02023">
    <property type="entry name" value="SCAN"/>
    <property type="match status" value="1"/>
</dbReference>
<dbReference type="Pfam" id="PF00096">
    <property type="entry name" value="zf-C2H2"/>
    <property type="match status" value="14"/>
</dbReference>
<dbReference type="SMART" id="SM00431">
    <property type="entry name" value="SCAN"/>
    <property type="match status" value="1"/>
</dbReference>
<dbReference type="SMART" id="SM00355">
    <property type="entry name" value="ZnF_C2H2"/>
    <property type="match status" value="14"/>
</dbReference>
<dbReference type="SUPFAM" id="SSF57667">
    <property type="entry name" value="beta-beta-alpha zinc fingers"/>
    <property type="match status" value="9"/>
</dbReference>
<dbReference type="SUPFAM" id="SSF47353">
    <property type="entry name" value="Retrovirus capsid dimerization domain-like"/>
    <property type="match status" value="1"/>
</dbReference>
<dbReference type="PROSITE" id="PS50804">
    <property type="entry name" value="SCAN_BOX"/>
    <property type="match status" value="1"/>
</dbReference>
<dbReference type="PROSITE" id="PS00028">
    <property type="entry name" value="ZINC_FINGER_C2H2_1"/>
    <property type="match status" value="14"/>
</dbReference>
<dbReference type="PROSITE" id="PS50157">
    <property type="entry name" value="ZINC_FINGER_C2H2_2"/>
    <property type="match status" value="14"/>
</dbReference>
<evidence type="ECO:0000250" key="1"/>
<evidence type="ECO:0000255" key="2">
    <source>
        <dbReference type="PROSITE-ProRule" id="PRU00042"/>
    </source>
</evidence>
<evidence type="ECO:0000255" key="3">
    <source>
        <dbReference type="PROSITE-ProRule" id="PRU00187"/>
    </source>
</evidence>
<evidence type="ECO:0000256" key="4">
    <source>
        <dbReference type="SAM" id="MobiDB-lite"/>
    </source>
</evidence>
<evidence type="ECO:0000269" key="5">
    <source>
    </source>
</evidence>
<evidence type="ECO:0000269" key="6">
    <source>
    </source>
</evidence>
<evidence type="ECO:0000303" key="7">
    <source>
    </source>
</evidence>
<evidence type="ECO:0000303" key="8">
    <source>
    </source>
</evidence>
<evidence type="ECO:0000303" key="9">
    <source ref="3"/>
</evidence>
<evidence type="ECO:0000305" key="10"/>
<keyword id="KW-0025">Alternative splicing</keyword>
<keyword id="KW-0217">Developmental protein</keyword>
<keyword id="KW-0221">Differentiation</keyword>
<keyword id="KW-0238">DNA-binding</keyword>
<keyword id="KW-0479">Metal-binding</keyword>
<keyword id="KW-0539">Nucleus</keyword>
<keyword id="KW-1267">Proteomics identification</keyword>
<keyword id="KW-1185">Reference proteome</keyword>
<keyword id="KW-0677">Repeat</keyword>
<keyword id="KW-0744">Spermatogenesis</keyword>
<keyword id="KW-0804">Transcription</keyword>
<keyword id="KW-0805">Transcription regulation</keyword>
<keyword id="KW-0862">Zinc</keyword>
<keyword id="KW-0863">Zinc-finger</keyword>
<gene>
    <name type="primary">ZSCAN2</name>
    <name type="synonym">ZFP29</name>
    <name type="synonym">ZNF854</name>
</gene>
<proteinExistence type="evidence at protein level"/>
<organism>
    <name type="scientific">Homo sapiens</name>
    <name type="common">Human</name>
    <dbReference type="NCBI Taxonomy" id="9606"/>
    <lineage>
        <taxon>Eukaryota</taxon>
        <taxon>Metazoa</taxon>
        <taxon>Chordata</taxon>
        <taxon>Craniata</taxon>
        <taxon>Vertebrata</taxon>
        <taxon>Euteleostomi</taxon>
        <taxon>Mammalia</taxon>
        <taxon>Eutheria</taxon>
        <taxon>Euarchontoglires</taxon>
        <taxon>Primates</taxon>
        <taxon>Haplorrhini</taxon>
        <taxon>Catarrhini</taxon>
        <taxon>Hominidae</taxon>
        <taxon>Homo</taxon>
    </lineage>
</organism>
<reference key="1">
    <citation type="submission" date="2003-03" db="EMBL/GenBank/DDBJ databases">
        <title>Cloning and characterization of a novel zinc finger gene.</title>
        <authorList>
            <person name="Shan Y.X."/>
            <person name="Luo K.T."/>
            <person name="Guo Z.K."/>
            <person name="Tang W.W."/>
            <person name="Ye G.M."/>
            <person name="Yu L."/>
        </authorList>
    </citation>
    <scope>NUCLEOTIDE SEQUENCE [MRNA] (ISOFORM 1)</scope>
</reference>
<reference key="2">
    <citation type="journal article" date="2004" name="Nat. Genet.">
        <title>Complete sequencing and characterization of 21,243 full-length human cDNAs.</title>
        <authorList>
            <person name="Ota T."/>
            <person name="Suzuki Y."/>
            <person name="Nishikawa T."/>
            <person name="Otsuki T."/>
            <person name="Sugiyama T."/>
            <person name="Irie R."/>
            <person name="Wakamatsu A."/>
            <person name="Hayashi K."/>
            <person name="Sato H."/>
            <person name="Nagai K."/>
            <person name="Kimura K."/>
            <person name="Makita H."/>
            <person name="Sekine M."/>
            <person name="Obayashi M."/>
            <person name="Nishi T."/>
            <person name="Shibahara T."/>
            <person name="Tanaka T."/>
            <person name="Ishii S."/>
            <person name="Yamamoto J."/>
            <person name="Saito K."/>
            <person name="Kawai Y."/>
            <person name="Isono Y."/>
            <person name="Nakamura Y."/>
            <person name="Nagahari K."/>
            <person name="Murakami K."/>
            <person name="Yasuda T."/>
            <person name="Iwayanagi T."/>
            <person name="Wagatsuma M."/>
            <person name="Shiratori A."/>
            <person name="Sudo H."/>
            <person name="Hosoiri T."/>
            <person name="Kaku Y."/>
            <person name="Kodaira H."/>
            <person name="Kondo H."/>
            <person name="Sugawara M."/>
            <person name="Takahashi M."/>
            <person name="Kanda K."/>
            <person name="Yokoi T."/>
            <person name="Furuya T."/>
            <person name="Kikkawa E."/>
            <person name="Omura Y."/>
            <person name="Abe K."/>
            <person name="Kamihara K."/>
            <person name="Katsuta N."/>
            <person name="Sato K."/>
            <person name="Tanikawa M."/>
            <person name="Yamazaki M."/>
            <person name="Ninomiya K."/>
            <person name="Ishibashi T."/>
            <person name="Yamashita H."/>
            <person name="Murakawa K."/>
            <person name="Fujimori K."/>
            <person name="Tanai H."/>
            <person name="Kimata M."/>
            <person name="Watanabe M."/>
            <person name="Hiraoka S."/>
            <person name="Chiba Y."/>
            <person name="Ishida S."/>
            <person name="Ono Y."/>
            <person name="Takiguchi S."/>
            <person name="Watanabe S."/>
            <person name="Yosida M."/>
            <person name="Hotuta T."/>
            <person name="Kusano J."/>
            <person name="Kanehori K."/>
            <person name="Takahashi-Fujii A."/>
            <person name="Hara H."/>
            <person name="Tanase T.-O."/>
            <person name="Nomura Y."/>
            <person name="Togiya S."/>
            <person name="Komai F."/>
            <person name="Hara R."/>
            <person name="Takeuchi K."/>
            <person name="Arita M."/>
            <person name="Imose N."/>
            <person name="Musashino K."/>
            <person name="Yuuki H."/>
            <person name="Oshima A."/>
            <person name="Sasaki N."/>
            <person name="Aotsuka S."/>
            <person name="Yoshikawa Y."/>
            <person name="Matsunawa H."/>
            <person name="Ichihara T."/>
            <person name="Shiohata N."/>
            <person name="Sano S."/>
            <person name="Moriya S."/>
            <person name="Momiyama H."/>
            <person name="Satoh N."/>
            <person name="Takami S."/>
            <person name="Terashima Y."/>
            <person name="Suzuki O."/>
            <person name="Nakagawa S."/>
            <person name="Senoh A."/>
            <person name="Mizoguchi H."/>
            <person name="Goto Y."/>
            <person name="Shimizu F."/>
            <person name="Wakebe H."/>
            <person name="Hishigaki H."/>
            <person name="Watanabe T."/>
            <person name="Sugiyama A."/>
            <person name="Takemoto M."/>
            <person name="Kawakami B."/>
            <person name="Yamazaki M."/>
            <person name="Watanabe K."/>
            <person name="Kumagai A."/>
            <person name="Itakura S."/>
            <person name="Fukuzumi Y."/>
            <person name="Fujimori Y."/>
            <person name="Komiyama M."/>
            <person name="Tashiro H."/>
            <person name="Tanigami A."/>
            <person name="Fujiwara T."/>
            <person name="Ono T."/>
            <person name="Yamada K."/>
            <person name="Fujii Y."/>
            <person name="Ozaki K."/>
            <person name="Hirao M."/>
            <person name="Ohmori Y."/>
            <person name="Kawabata A."/>
            <person name="Hikiji T."/>
            <person name="Kobatake N."/>
            <person name="Inagaki H."/>
            <person name="Ikema Y."/>
            <person name="Okamoto S."/>
            <person name="Okitani R."/>
            <person name="Kawakami T."/>
            <person name="Noguchi S."/>
            <person name="Itoh T."/>
            <person name="Shigeta K."/>
            <person name="Senba T."/>
            <person name="Matsumura K."/>
            <person name="Nakajima Y."/>
            <person name="Mizuno T."/>
            <person name="Morinaga M."/>
            <person name="Sasaki M."/>
            <person name="Togashi T."/>
            <person name="Oyama M."/>
            <person name="Hata H."/>
            <person name="Watanabe M."/>
            <person name="Komatsu T."/>
            <person name="Mizushima-Sugano J."/>
            <person name="Satoh T."/>
            <person name="Shirai Y."/>
            <person name="Takahashi Y."/>
            <person name="Nakagawa K."/>
            <person name="Okumura K."/>
            <person name="Nagase T."/>
            <person name="Nomura N."/>
            <person name="Kikuchi H."/>
            <person name="Masuho Y."/>
            <person name="Yamashita R."/>
            <person name="Nakai K."/>
            <person name="Yada T."/>
            <person name="Nakamura Y."/>
            <person name="Ohara O."/>
            <person name="Isogai T."/>
            <person name="Sugano S."/>
        </authorList>
    </citation>
    <scope>NUCLEOTIDE SEQUENCE [LARGE SCALE MRNA] (ISOFORM 3)</scope>
    <scope>VARIANT THR-191</scope>
    <source>
        <tissue>Trachea</tissue>
    </source>
</reference>
<reference key="3">
    <citation type="submission" date="2003-04" db="EMBL/GenBank/DDBJ databases">
        <title>Cloning and characterization of a novel SCAN box-containing gene.</title>
        <authorList>
            <person name="Luo K.T."/>
            <person name="Yu L."/>
        </authorList>
    </citation>
    <scope>NUCLEOTIDE SEQUENCE [MRNA] (ISOFORM 4)</scope>
</reference>
<reference key="4">
    <citation type="journal article" date="2006" name="Nature">
        <title>Analysis of the DNA sequence and duplication history of human chromosome 15.</title>
        <authorList>
            <person name="Zody M.C."/>
            <person name="Garber M."/>
            <person name="Sharpe T."/>
            <person name="Young S.K."/>
            <person name="Rowen L."/>
            <person name="O'Neill K."/>
            <person name="Whittaker C.A."/>
            <person name="Kamal M."/>
            <person name="Chang J.L."/>
            <person name="Cuomo C.A."/>
            <person name="Dewar K."/>
            <person name="FitzGerald M.G."/>
            <person name="Kodira C.D."/>
            <person name="Madan A."/>
            <person name="Qin S."/>
            <person name="Yang X."/>
            <person name="Abbasi N."/>
            <person name="Abouelleil A."/>
            <person name="Arachchi H.M."/>
            <person name="Baradarani L."/>
            <person name="Birditt B."/>
            <person name="Bloom S."/>
            <person name="Bloom T."/>
            <person name="Borowsky M.L."/>
            <person name="Burke J."/>
            <person name="Butler J."/>
            <person name="Cook A."/>
            <person name="DeArellano K."/>
            <person name="DeCaprio D."/>
            <person name="Dorris L. III"/>
            <person name="Dors M."/>
            <person name="Eichler E.E."/>
            <person name="Engels R."/>
            <person name="Fahey J."/>
            <person name="Fleetwood P."/>
            <person name="Friedman C."/>
            <person name="Gearin G."/>
            <person name="Hall J.L."/>
            <person name="Hensley G."/>
            <person name="Johnson E."/>
            <person name="Jones C."/>
            <person name="Kamat A."/>
            <person name="Kaur A."/>
            <person name="Locke D.P."/>
            <person name="Madan A."/>
            <person name="Munson G."/>
            <person name="Jaffe D.B."/>
            <person name="Lui A."/>
            <person name="Macdonald P."/>
            <person name="Mauceli E."/>
            <person name="Naylor J.W."/>
            <person name="Nesbitt R."/>
            <person name="Nicol R."/>
            <person name="O'Leary S.B."/>
            <person name="Ratcliffe A."/>
            <person name="Rounsley S."/>
            <person name="She X."/>
            <person name="Sneddon K.M.B."/>
            <person name="Stewart S."/>
            <person name="Sougnez C."/>
            <person name="Stone S.M."/>
            <person name="Topham K."/>
            <person name="Vincent D."/>
            <person name="Wang S."/>
            <person name="Zimmer A.R."/>
            <person name="Birren B.W."/>
            <person name="Hood L."/>
            <person name="Lander E.S."/>
            <person name="Nusbaum C."/>
        </authorList>
    </citation>
    <scope>NUCLEOTIDE SEQUENCE [LARGE SCALE GENOMIC DNA]</scope>
</reference>
<reference key="5">
    <citation type="journal article" date="2004" name="Genome Res.">
        <title>The status, quality, and expansion of the NIH full-length cDNA project: the Mammalian Gene Collection (MGC).</title>
        <authorList>
            <consortium name="The MGC Project Team"/>
        </authorList>
    </citation>
    <scope>NUCLEOTIDE SEQUENCE [LARGE SCALE MRNA] (ISOFORMS 1 AND 3)</scope>
    <scope>VARIANT THR-191</scope>
    <source>
        <tissue>Brain</tissue>
        <tissue>Testis</tissue>
    </source>
</reference>
<protein>
    <recommendedName>
        <fullName>Zinc finger and SCAN domain-containing protein 2</fullName>
    </recommendedName>
    <alternativeName>
        <fullName>Zinc finger protein 29 homolog</fullName>
        <shortName>Zfp-29</shortName>
    </alternativeName>
    <alternativeName>
        <fullName>Zinc finger protein 854</fullName>
    </alternativeName>
</protein>
<accession>Q7Z7L9</accession>
<accession>A6NG83</accession>
<accession>B2RMQ9</accession>
<accession>Q6ZQY9</accession>
<accession>Q9NWU4</accession>
<sequence>MMAADIPRVTTPLSSLVQVPQEEDRQEEEVTTMILEDDSWVQEAVLQEDGPESEPFPQSAGKGGPQEEVTRGPQGALGRLRELCRRWLRPEVHTKEQMLTMLPKEIQAWLQEHRPESSEEAAALVEDLTQTLQDSDFEIQSENGENCNQDMFENESRKIFSEMPEGESAQHSDGESDFERDAGIQRLQGHSPGEDHGEVVSQDREVGQLIGLQGTYLGEKPYECPQCGKTFSRKSHLITHERTHTGEKYYKCDECGKSFSDGSNFSRHQTTHTGEKPYKCRDCGKSFSRSANLITHQRIHTGEKPFQCAECGKSFSRSPNLIAHQRTHTGEKPYSCPECGKSFGNRSSLNTHQGIHTGEKPYECKECGESFSYNSNLIRHQRIHTGEKPYKCTDCGQRFSQSSALITHRRTHTGEKPYQCSECGKSFSRSSNLATHRRTHMVEKPYKCGVCGKSFSQSSSLIAHQGMHTGEKPYECLTCGESFSWSSNLLKHQRIHTGEKPYKCSECGKCFSQRSQLVVHQRTHTGEKPYKCLMCGKSFSRGSILVMHQRAHLGDKPYRCPECGKGFSWNSVLIIHQRIHTGEKPYKCPECGKGFSNSSNFITHQRTHMKEKLY</sequence>
<feature type="chain" id="PRO_0000047749" description="Zinc finger and SCAN domain-containing protein 2">
    <location>
        <begin position="1"/>
        <end position="614"/>
    </location>
</feature>
<feature type="domain" description="SCAN box" evidence="3">
    <location>
        <begin position="59"/>
        <end position="132"/>
    </location>
</feature>
<feature type="zinc finger region" description="C2H2-type 1" evidence="2">
    <location>
        <begin position="222"/>
        <end position="244"/>
    </location>
</feature>
<feature type="zinc finger region" description="C2H2-type 2" evidence="2">
    <location>
        <begin position="250"/>
        <end position="272"/>
    </location>
</feature>
<feature type="zinc finger region" description="C2H2-type 3" evidence="2">
    <location>
        <begin position="278"/>
        <end position="300"/>
    </location>
</feature>
<feature type="zinc finger region" description="C2H2-type 4" evidence="2">
    <location>
        <begin position="306"/>
        <end position="328"/>
    </location>
</feature>
<feature type="zinc finger region" description="C2H2-type 5" evidence="2">
    <location>
        <begin position="334"/>
        <end position="356"/>
    </location>
</feature>
<feature type="zinc finger region" description="C2H2-type 6" evidence="2">
    <location>
        <begin position="362"/>
        <end position="384"/>
    </location>
</feature>
<feature type="zinc finger region" description="C2H2-type 7" evidence="2">
    <location>
        <begin position="390"/>
        <end position="412"/>
    </location>
</feature>
<feature type="zinc finger region" description="C2H2-type 8" evidence="2">
    <location>
        <begin position="418"/>
        <end position="440"/>
    </location>
</feature>
<feature type="zinc finger region" description="C2H2-type 9" evidence="2">
    <location>
        <begin position="446"/>
        <end position="468"/>
    </location>
</feature>
<feature type="zinc finger region" description="C2H2-type 10" evidence="2">
    <location>
        <begin position="474"/>
        <end position="496"/>
    </location>
</feature>
<feature type="zinc finger region" description="C2H2-type 11" evidence="2">
    <location>
        <begin position="502"/>
        <end position="524"/>
    </location>
</feature>
<feature type="zinc finger region" description="C2H2-type 12" evidence="2">
    <location>
        <begin position="530"/>
        <end position="552"/>
    </location>
</feature>
<feature type="zinc finger region" description="C2H2-type 13" evidence="2">
    <location>
        <begin position="558"/>
        <end position="580"/>
    </location>
</feature>
<feature type="zinc finger region" description="C2H2-type 14" evidence="2">
    <location>
        <begin position="586"/>
        <end position="608"/>
    </location>
</feature>
<feature type="region of interest" description="Disordered" evidence="4">
    <location>
        <begin position="1"/>
        <end position="26"/>
    </location>
</feature>
<feature type="region of interest" description="Disordered" evidence="4">
    <location>
        <begin position="43"/>
        <end position="76"/>
    </location>
</feature>
<feature type="splice variant" id="VSP_011947" description="In isoform 3." evidence="7 8">
    <original>DFEIQSENGENCNQD</original>
    <variation>AVAVVASLPVEVTSL</variation>
    <location>
        <begin position="136"/>
        <end position="150"/>
    </location>
</feature>
<feature type="splice variant" id="VSP_040201" description="In isoform 4." evidence="9">
    <original>DFEIQSENGEN</original>
    <variation>ETASCVHGCPV</variation>
    <location>
        <begin position="136"/>
        <end position="146"/>
    </location>
</feature>
<feature type="splice variant" id="VSP_040202" description="In isoform 4." evidence="9">
    <location>
        <begin position="147"/>
        <end position="614"/>
    </location>
</feature>
<feature type="splice variant" id="VSP_011948" description="In isoform 3." evidence="7 8">
    <location>
        <begin position="151"/>
        <end position="614"/>
    </location>
</feature>
<feature type="sequence variant" id="VAR_065095" description="In dbSNP:rs2044502." evidence="5 6">
    <original>S</original>
    <variation>T</variation>
    <location>
        <position position="191"/>
    </location>
</feature>
<feature type="sequence conflict" description="In Ref. 1; AAP36989." evidence="10" ref="1">
    <original>SD</original>
    <variation>N</variation>
    <location>
        <begin position="135"/>
        <end position="136"/>
    </location>
</feature>
<feature type="sequence conflict" description="In Ref. 2; BAA91283 and 5; AAH41620." evidence="10" ref="2 5">
    <original>V</original>
    <variation>F</variation>
    <location sequence="Q7Z7L9-3">
        <position position="140"/>
    </location>
</feature>
<comment type="function">
    <text evidence="1">May be involved in transcriptional regulation during the post-meiotic stages of spermatogenesis.</text>
</comment>
<comment type="subcellular location">
    <subcellularLocation>
        <location evidence="3">Nucleus</location>
    </subcellularLocation>
</comment>
<comment type="alternative products">
    <event type="alternative splicing"/>
    <isoform>
        <id>Q7Z7L9-1</id>
        <name>1</name>
        <sequence type="displayed"/>
    </isoform>
    <isoform>
        <id>Q7Z7L9-3</id>
        <name>3</name>
        <sequence type="described" ref="VSP_011947 VSP_011948"/>
    </isoform>
    <isoform>
        <id>Q7Z7L9-4</id>
        <name>4</name>
        <sequence type="described" ref="VSP_040201 VSP_040202"/>
    </isoform>
</comment>
<comment type="similarity">
    <text evidence="10">Belongs to the krueppel C2H2-type zinc-finger protein family.</text>
</comment>
<comment type="sequence caution" evidence="10">
    <conflict type="erroneous translation">
        <sequence resource="EMBL-CDS" id="BAC87537"/>
    </conflict>
    <text>Aberrant splicing.</text>
</comment>
<name>ZSCA2_HUMAN</name>